<protein>
    <recommendedName>
        <fullName>Inner membrane protein YiaB</fullName>
    </recommendedName>
</protein>
<reference key="1">
    <citation type="journal article" date="1984" name="Appl. Environ. Microbiol.">
        <title>Cloning and sequencing of the xylose isomerase and xylulose kinase genes of Escherichia coli.</title>
        <authorList>
            <person name="Lawlis V.B."/>
            <person name="Dennis M.S."/>
            <person name="Chen E.Y."/>
            <person name="Smith D.H."/>
            <person name="Henner D.J."/>
        </authorList>
    </citation>
    <scope>NUCLEOTIDE SEQUENCE [GENOMIC DNA]</scope>
    <source>
        <strain>K12 / MM294 / ATCC 33625 / DSM 5208</strain>
    </source>
</reference>
<reference key="2">
    <citation type="journal article" date="1994" name="Nucleic Acids Res.">
        <title>Analysis of the Escherichia coli genome. V. DNA sequence of the region from 76.0 to 81.5 minutes.</title>
        <authorList>
            <person name="Sofia H.J."/>
            <person name="Burland V."/>
            <person name="Daniels D.L."/>
            <person name="Plunkett G. III"/>
            <person name="Blattner F.R."/>
        </authorList>
    </citation>
    <scope>NUCLEOTIDE SEQUENCE [LARGE SCALE GENOMIC DNA]</scope>
    <source>
        <strain>K12 / MG1655 / ATCC 47076</strain>
    </source>
</reference>
<reference key="3">
    <citation type="journal article" date="1997" name="Science">
        <title>The complete genome sequence of Escherichia coli K-12.</title>
        <authorList>
            <person name="Blattner F.R."/>
            <person name="Plunkett G. III"/>
            <person name="Bloch C.A."/>
            <person name="Perna N.T."/>
            <person name="Burland V."/>
            <person name="Riley M."/>
            <person name="Collado-Vides J."/>
            <person name="Glasner J.D."/>
            <person name="Rode C.K."/>
            <person name="Mayhew G.F."/>
            <person name="Gregor J."/>
            <person name="Davis N.W."/>
            <person name="Kirkpatrick H.A."/>
            <person name="Goeden M.A."/>
            <person name="Rose D.J."/>
            <person name="Mau B."/>
            <person name="Shao Y."/>
        </authorList>
    </citation>
    <scope>NUCLEOTIDE SEQUENCE [LARGE SCALE GENOMIC DNA]</scope>
    <source>
        <strain>K12 / MG1655 / ATCC 47076</strain>
    </source>
</reference>
<reference key="4">
    <citation type="journal article" date="2006" name="Mol. Syst. Biol.">
        <title>Highly accurate genome sequences of Escherichia coli K-12 strains MG1655 and W3110.</title>
        <authorList>
            <person name="Hayashi K."/>
            <person name="Morooka N."/>
            <person name="Yamamoto Y."/>
            <person name="Fujita K."/>
            <person name="Isono K."/>
            <person name="Choi S."/>
            <person name="Ohtsubo E."/>
            <person name="Baba T."/>
            <person name="Wanner B.L."/>
            <person name="Mori H."/>
            <person name="Horiuchi T."/>
        </authorList>
    </citation>
    <scope>NUCLEOTIDE SEQUENCE [LARGE SCALE GENOMIC DNA]</scope>
    <source>
        <strain>K12 / W3110 / ATCC 27325 / DSM 5911</strain>
    </source>
</reference>
<reference key="5">
    <citation type="journal article" date="2002" name="Proc. Natl. Acad. Sci. U.S.A.">
        <title>Rapid topology mapping of Escherichia coli inner-membrane proteins by prediction and PhoA/GFP fusion analysis.</title>
        <authorList>
            <person name="Drew D."/>
            <person name="Sjoestrand D."/>
            <person name="Nilsson J."/>
            <person name="Urbig T."/>
            <person name="Chin C.-N."/>
            <person name="de Gier J.-W."/>
            <person name="von Heijne G."/>
        </authorList>
    </citation>
    <scope>TOPOLOGY</scope>
    <source>
        <strain>K12 / JM109 / ATCC 53323</strain>
    </source>
</reference>
<reference key="6">
    <citation type="journal article" date="2005" name="Science">
        <title>Global topology analysis of the Escherichia coli inner membrane proteome.</title>
        <authorList>
            <person name="Daley D.O."/>
            <person name="Rapp M."/>
            <person name="Granseth E."/>
            <person name="Melen K."/>
            <person name="Drew D."/>
            <person name="von Heijne G."/>
        </authorList>
    </citation>
    <scope>TOPOLOGY [LARGE SCALE ANALYSIS]</scope>
    <source>
        <strain>K12 / MG1655 / ATCC 47076</strain>
    </source>
</reference>
<sequence length="113" mass="12555">MKTSKTVAKLLFVVGALVYLVGLWISCPLLSGKGYFLGVLMTATFGNYAYLRAEKLGQLDDFFTHICQLVALITIGLLFIGVLNAPINTYEMVIYPIAFFVCLFGQMRLFRSA</sequence>
<feature type="chain" id="PRO_0000169589" description="Inner membrane protein YiaB">
    <location>
        <begin position="1"/>
        <end position="113"/>
    </location>
</feature>
<feature type="topological domain" description="Cytoplasmic" evidence="1">
    <location>
        <begin position="1"/>
        <end position="9"/>
    </location>
</feature>
<feature type="transmembrane region" description="Helical" evidence="1">
    <location>
        <begin position="10"/>
        <end position="20"/>
    </location>
</feature>
<feature type="topological domain" description="Periplasmic" evidence="1">
    <location>
        <begin position="21"/>
        <end position="33"/>
    </location>
</feature>
<feature type="transmembrane region" description="Helical" evidence="1">
    <location>
        <begin position="34"/>
        <end position="51"/>
    </location>
</feature>
<feature type="topological domain" description="Cytoplasmic" evidence="1">
    <location>
        <begin position="52"/>
        <end position="61"/>
    </location>
</feature>
<feature type="transmembrane region" description="Helical" evidence="1">
    <location>
        <begin position="62"/>
        <end position="82"/>
    </location>
</feature>
<feature type="topological domain" description="Periplasmic" evidence="1">
    <location>
        <begin position="83"/>
        <end position="84"/>
    </location>
</feature>
<feature type="transmembrane region" description="Helical" evidence="1">
    <location>
        <begin position="85"/>
        <end position="105"/>
    </location>
</feature>
<feature type="topological domain" description="Cytoplasmic" evidence="1">
    <location>
        <begin position="106"/>
        <end position="113"/>
    </location>
</feature>
<feature type="sequence conflict" description="In Ref. 1; CAA28396." evidence="2" ref="1">
    <original>L</original>
    <variation>V</variation>
    <location>
        <position position="77"/>
    </location>
</feature>
<feature type="sequence conflict" description="In Ref. 1; CAA28396." evidence="2" ref="1">
    <original>APINTYEMVIYPIAFFVCLFGQMRLFRSA</original>
    <variation>DLSILMKW</variation>
    <location>
        <begin position="85"/>
        <end position="113"/>
    </location>
</feature>
<organism>
    <name type="scientific">Escherichia coli (strain K12)</name>
    <dbReference type="NCBI Taxonomy" id="83333"/>
    <lineage>
        <taxon>Bacteria</taxon>
        <taxon>Pseudomonadati</taxon>
        <taxon>Pseudomonadota</taxon>
        <taxon>Gammaproteobacteria</taxon>
        <taxon>Enterobacterales</taxon>
        <taxon>Enterobacteriaceae</taxon>
        <taxon>Escherichia</taxon>
    </lineage>
</organism>
<gene>
    <name type="primary">yiaB</name>
    <name type="ordered locus">b3563</name>
    <name type="ordered locus">JW5654</name>
</gene>
<keyword id="KW-0997">Cell inner membrane</keyword>
<keyword id="KW-1003">Cell membrane</keyword>
<keyword id="KW-0472">Membrane</keyword>
<keyword id="KW-1185">Reference proteome</keyword>
<keyword id="KW-0812">Transmembrane</keyword>
<keyword id="KW-1133">Transmembrane helix</keyword>
<comment type="subcellular location">
    <subcellularLocation>
        <location>Cell inner membrane</location>
        <topology>Multi-pass membrane protein</topology>
    </subcellularLocation>
</comment>
<comment type="sequence caution" evidence="2">
    <conflict type="erroneous initiation">
        <sequence resource="EMBL-CDS" id="AAB18540"/>
    </conflict>
</comment>
<comment type="sequence caution" evidence="2">
    <conflict type="erroneous initiation">
        <sequence resource="EMBL-CDS" id="CAA28396"/>
    </conflict>
</comment>
<evidence type="ECO:0000255" key="1"/>
<evidence type="ECO:0000305" key="2"/>
<dbReference type="EMBL" id="X04691">
    <property type="protein sequence ID" value="CAA28396.1"/>
    <property type="status" value="ALT_INIT"/>
    <property type="molecule type" value="Genomic_DNA"/>
</dbReference>
<dbReference type="EMBL" id="U00039">
    <property type="protein sequence ID" value="AAB18540.1"/>
    <property type="status" value="ALT_INIT"/>
    <property type="molecule type" value="Genomic_DNA"/>
</dbReference>
<dbReference type="EMBL" id="U00096">
    <property type="protein sequence ID" value="AAC76587.2"/>
    <property type="molecule type" value="Genomic_DNA"/>
</dbReference>
<dbReference type="EMBL" id="AP009048">
    <property type="protein sequence ID" value="BAE77730.1"/>
    <property type="molecule type" value="Genomic_DNA"/>
</dbReference>
<dbReference type="PIR" id="S47784">
    <property type="entry name" value="Q3ECX1"/>
</dbReference>
<dbReference type="RefSeq" id="NP_418020.2">
    <property type="nucleotide sequence ID" value="NC_000913.3"/>
</dbReference>
<dbReference type="RefSeq" id="WP_001295228.1">
    <property type="nucleotide sequence ID" value="NZ_SSZK01000041.1"/>
</dbReference>
<dbReference type="BioGRID" id="4262144">
    <property type="interactions" value="8"/>
</dbReference>
<dbReference type="FunCoup" id="P11286">
    <property type="interactions" value="377"/>
</dbReference>
<dbReference type="STRING" id="511145.b3563"/>
<dbReference type="TCDB" id="9.B.44.1.1">
    <property type="family name" value="the yiaa-yiab (yiaab) family"/>
</dbReference>
<dbReference type="PaxDb" id="511145-b3563"/>
<dbReference type="EnsemblBacteria" id="AAC76587">
    <property type="protein sequence ID" value="AAC76587"/>
    <property type="gene ID" value="b3563"/>
</dbReference>
<dbReference type="GeneID" id="948152"/>
<dbReference type="KEGG" id="ecj:JW5654"/>
<dbReference type="KEGG" id="eco:b3563"/>
<dbReference type="KEGG" id="ecoc:C3026_19320"/>
<dbReference type="PATRIC" id="fig|1411691.4.peg.3149"/>
<dbReference type="EchoBASE" id="EB1246"/>
<dbReference type="eggNOG" id="COG4682">
    <property type="taxonomic scope" value="Bacteria"/>
</dbReference>
<dbReference type="HOGENOM" id="CLU_123353_1_0_6"/>
<dbReference type="InParanoid" id="P11286"/>
<dbReference type="OMA" id="GLWPACH"/>
<dbReference type="OrthoDB" id="6561911at2"/>
<dbReference type="PhylomeDB" id="P11286"/>
<dbReference type="BioCyc" id="EcoCyc:EG11267-MONOMER"/>
<dbReference type="PRO" id="PR:P11286"/>
<dbReference type="Proteomes" id="UP000000625">
    <property type="component" value="Chromosome"/>
</dbReference>
<dbReference type="GO" id="GO:0005886">
    <property type="term" value="C:plasma membrane"/>
    <property type="evidence" value="ECO:0000314"/>
    <property type="project" value="EcoCyc"/>
</dbReference>
<dbReference type="GO" id="GO:0006974">
    <property type="term" value="P:DNA damage response"/>
    <property type="evidence" value="ECO:0000318"/>
    <property type="project" value="GO_Central"/>
</dbReference>
<dbReference type="InterPro" id="IPR038972">
    <property type="entry name" value="YiaA-like"/>
</dbReference>
<dbReference type="InterPro" id="IPR008024">
    <property type="entry name" value="YiaAB"/>
</dbReference>
<dbReference type="NCBIfam" id="NF008492">
    <property type="entry name" value="PRK11403.1"/>
    <property type="match status" value="1"/>
</dbReference>
<dbReference type="PANTHER" id="PTHR37290">
    <property type="entry name" value="INNER MEMBRANE PROTEIN YIAA-RELATED"/>
    <property type="match status" value="1"/>
</dbReference>
<dbReference type="PANTHER" id="PTHR37290:SF2">
    <property type="entry name" value="INNER MEMBRANE PROTEIN YIAB"/>
    <property type="match status" value="1"/>
</dbReference>
<dbReference type="Pfam" id="PF05360">
    <property type="entry name" value="YiaAB"/>
    <property type="match status" value="1"/>
</dbReference>
<dbReference type="PROSITE" id="PS51257">
    <property type="entry name" value="PROKAR_LIPOPROTEIN"/>
    <property type="match status" value="1"/>
</dbReference>
<name>YIAB_ECOLI</name>
<accession>P11286</accession>
<accession>Q2M7M6</accession>
<proteinExistence type="evidence at protein level"/>